<gene>
    <name type="primary">Mfap3</name>
</gene>
<sequence length="347" mass="38397">MKLHYCLCILLVVTFVPTALVLEDVTPLGTNQSSYNASFLSSFELSAGSYSGDDVIIAKEGTNVSLECLLTVDHYGEVHWYNSKGRQLHSRGGKWLVSDNFLNITSVAFDDRGLYTCIITSPTRASYSVTLRVIFTSGDMSVYYMVVCLIAFTITLILNVTRLCLMSTHLRKTEKAINEFFRTEGAEKLQKAFEIAKRIPIITSAKTLELAKVTQFKTMEFARYIEELARSVPLPPLILNCRAFVEEMFEAVRVDDPDDMGERIKERPALDAQSGIYVINPELGRSNSPGGDSDDGSLSEQGQEIAVQVSVHLQSETKSIGTDSQDSSHFSPPSDPASAEGSTHHRE</sequence>
<organism>
    <name type="scientific">Rattus norvegicus</name>
    <name type="common">Rat</name>
    <dbReference type="NCBI Taxonomy" id="10116"/>
    <lineage>
        <taxon>Eukaryota</taxon>
        <taxon>Metazoa</taxon>
        <taxon>Chordata</taxon>
        <taxon>Craniata</taxon>
        <taxon>Vertebrata</taxon>
        <taxon>Euteleostomi</taxon>
        <taxon>Mammalia</taxon>
        <taxon>Eutheria</taxon>
        <taxon>Euarchontoglires</taxon>
        <taxon>Glires</taxon>
        <taxon>Rodentia</taxon>
        <taxon>Myomorpha</taxon>
        <taxon>Muroidea</taxon>
        <taxon>Muridae</taxon>
        <taxon>Murinae</taxon>
        <taxon>Rattus</taxon>
    </lineage>
</organism>
<name>MFAP3_RAT</name>
<evidence type="ECO:0000250" key="1"/>
<evidence type="ECO:0000255" key="2"/>
<evidence type="ECO:0000255" key="3">
    <source>
        <dbReference type="PROSITE-ProRule" id="PRU00114"/>
    </source>
</evidence>
<evidence type="ECO:0000256" key="4">
    <source>
        <dbReference type="SAM" id="MobiDB-lite"/>
    </source>
</evidence>
<evidence type="ECO:0000305" key="5"/>
<accession>Q6AYF7</accession>
<comment type="function">
    <text evidence="1">Component of the elastin-associated microfibrils.</text>
</comment>
<comment type="subcellular location">
    <subcellularLocation>
        <location evidence="5">Cell membrane</location>
        <topology evidence="5">Single-pass type I membrane protein</topology>
    </subcellularLocation>
</comment>
<comment type="PTM">
    <text evidence="5">Glycosylated.</text>
</comment>
<proteinExistence type="evidence at transcript level"/>
<keyword id="KW-1003">Cell membrane</keyword>
<keyword id="KW-1015">Disulfide bond</keyword>
<keyword id="KW-0325">Glycoprotein</keyword>
<keyword id="KW-0393">Immunoglobulin domain</keyword>
<keyword id="KW-0472">Membrane</keyword>
<keyword id="KW-1185">Reference proteome</keyword>
<keyword id="KW-0732">Signal</keyword>
<keyword id="KW-0812">Transmembrane</keyword>
<keyword id="KW-1133">Transmembrane helix</keyword>
<feature type="signal peptide" evidence="2">
    <location>
        <begin position="1"/>
        <end position="22"/>
    </location>
</feature>
<feature type="chain" id="PRO_0000014868" description="Microfibril-associated glycoprotein 3">
    <location>
        <begin position="23"/>
        <end position="347"/>
    </location>
</feature>
<feature type="topological domain" description="Extracellular" evidence="2">
    <location>
        <begin position="23"/>
        <end position="139"/>
    </location>
</feature>
<feature type="transmembrane region" description="Helical" evidence="2">
    <location>
        <begin position="140"/>
        <end position="160"/>
    </location>
</feature>
<feature type="topological domain" description="Cytoplasmic" evidence="2">
    <location>
        <begin position="161"/>
        <end position="347"/>
    </location>
</feature>
<feature type="domain" description="Ig-like C2-type">
    <location>
        <begin position="47"/>
        <end position="130"/>
    </location>
</feature>
<feature type="region of interest" description="Disordered" evidence="4">
    <location>
        <begin position="280"/>
        <end position="347"/>
    </location>
</feature>
<feature type="compositionally biased region" description="Polar residues" evidence="4">
    <location>
        <begin position="311"/>
        <end position="331"/>
    </location>
</feature>
<feature type="glycosylation site" description="N-linked (GlcNAc...) asparagine" evidence="2">
    <location>
        <position position="31"/>
    </location>
</feature>
<feature type="glycosylation site" description="N-linked (GlcNAc...) asparagine" evidence="2">
    <location>
        <position position="36"/>
    </location>
</feature>
<feature type="glycosylation site" description="N-linked (GlcNAc...) asparagine" evidence="2">
    <location>
        <position position="63"/>
    </location>
</feature>
<feature type="glycosylation site" description="N-linked (GlcNAc...) asparagine" evidence="2">
    <location>
        <position position="103"/>
    </location>
</feature>
<feature type="disulfide bond" evidence="3">
    <location>
        <begin position="68"/>
        <end position="117"/>
    </location>
</feature>
<dbReference type="EMBL" id="BC079064">
    <property type="protein sequence ID" value="AAH79064.1"/>
    <property type="molecule type" value="mRNA"/>
</dbReference>
<dbReference type="RefSeq" id="NP_001007610.1">
    <property type="nucleotide sequence ID" value="NM_001007609.1"/>
</dbReference>
<dbReference type="RefSeq" id="XP_006246441.1">
    <property type="nucleotide sequence ID" value="XM_006246379.4"/>
</dbReference>
<dbReference type="RefSeq" id="XP_038941315.1">
    <property type="nucleotide sequence ID" value="XM_039085387.2"/>
</dbReference>
<dbReference type="BioGRID" id="252088">
    <property type="interactions" value="1"/>
</dbReference>
<dbReference type="FunCoup" id="Q6AYF7">
    <property type="interactions" value="1996"/>
</dbReference>
<dbReference type="STRING" id="10116.ENSRNOP00000003361"/>
<dbReference type="GlyCosmos" id="Q6AYF7">
    <property type="glycosylation" value="4 sites, No reported glycans"/>
</dbReference>
<dbReference type="GlyGen" id="Q6AYF7">
    <property type="glycosylation" value="4 sites"/>
</dbReference>
<dbReference type="iPTMnet" id="Q6AYF7"/>
<dbReference type="PhosphoSitePlus" id="Q6AYF7"/>
<dbReference type="SwissPalm" id="Q6AYF7"/>
<dbReference type="PaxDb" id="10116-ENSRNOP00000003361"/>
<dbReference type="Ensembl" id="ENSRNOT00000003361.4">
    <property type="protein sequence ID" value="ENSRNOP00000003361.3"/>
    <property type="gene ID" value="ENSRNOG00000002443.4"/>
</dbReference>
<dbReference type="GeneID" id="287299"/>
<dbReference type="KEGG" id="rno:287299"/>
<dbReference type="UCSC" id="RGD:1359463">
    <property type="organism name" value="rat"/>
</dbReference>
<dbReference type="AGR" id="RGD:1359463"/>
<dbReference type="CTD" id="4238"/>
<dbReference type="RGD" id="1359463">
    <property type="gene designation" value="Mfap3"/>
</dbReference>
<dbReference type="eggNOG" id="ENOG502QW9J">
    <property type="taxonomic scope" value="Eukaryota"/>
</dbReference>
<dbReference type="GeneTree" id="ENSGT00390000011576"/>
<dbReference type="HOGENOM" id="CLU_056017_0_0_1"/>
<dbReference type="InParanoid" id="Q6AYF7"/>
<dbReference type="OMA" id="KPHCCLF"/>
<dbReference type="PhylomeDB" id="Q6AYF7"/>
<dbReference type="TreeFam" id="TF333205"/>
<dbReference type="PRO" id="PR:Q6AYF7"/>
<dbReference type="Proteomes" id="UP000002494">
    <property type="component" value="Chromosome 10"/>
</dbReference>
<dbReference type="Bgee" id="ENSRNOG00000002443">
    <property type="expression patterns" value="Expressed in jejunum and 19 other cell types or tissues"/>
</dbReference>
<dbReference type="GO" id="GO:0005886">
    <property type="term" value="C:plasma membrane"/>
    <property type="evidence" value="ECO:0007669"/>
    <property type="project" value="UniProtKB-SubCell"/>
</dbReference>
<dbReference type="Gene3D" id="2.60.40.10">
    <property type="entry name" value="Immunoglobulins"/>
    <property type="match status" value="1"/>
</dbReference>
<dbReference type="InterPro" id="IPR007110">
    <property type="entry name" value="Ig-like_dom"/>
</dbReference>
<dbReference type="InterPro" id="IPR036179">
    <property type="entry name" value="Ig-like_dom_sf"/>
</dbReference>
<dbReference type="InterPro" id="IPR013783">
    <property type="entry name" value="Ig-like_fold"/>
</dbReference>
<dbReference type="InterPro" id="IPR003599">
    <property type="entry name" value="Ig_sub"/>
</dbReference>
<dbReference type="InterPro" id="IPR003598">
    <property type="entry name" value="Ig_sub2"/>
</dbReference>
<dbReference type="PANTHER" id="PTHR14340">
    <property type="entry name" value="MICROFIBRIL-ASSOCIATED GLYCOPROTEIN 3"/>
    <property type="match status" value="1"/>
</dbReference>
<dbReference type="PANTHER" id="PTHR14340:SF4">
    <property type="entry name" value="MICROFIBRIL-ASSOCIATED GLYCOPROTEIN 3"/>
    <property type="match status" value="1"/>
</dbReference>
<dbReference type="Pfam" id="PF13927">
    <property type="entry name" value="Ig_3"/>
    <property type="match status" value="1"/>
</dbReference>
<dbReference type="SMART" id="SM00409">
    <property type="entry name" value="IG"/>
    <property type="match status" value="1"/>
</dbReference>
<dbReference type="SMART" id="SM00408">
    <property type="entry name" value="IGc2"/>
    <property type="match status" value="1"/>
</dbReference>
<dbReference type="SUPFAM" id="SSF48726">
    <property type="entry name" value="Immunoglobulin"/>
    <property type="match status" value="1"/>
</dbReference>
<dbReference type="PROSITE" id="PS50835">
    <property type="entry name" value="IG_LIKE"/>
    <property type="match status" value="1"/>
</dbReference>
<protein>
    <recommendedName>
        <fullName>Microfibril-associated glycoprotein 3</fullName>
    </recommendedName>
</protein>
<reference key="1">
    <citation type="journal article" date="2004" name="Genome Res.">
        <title>The status, quality, and expansion of the NIH full-length cDNA project: the Mammalian Gene Collection (MGC).</title>
        <authorList>
            <consortium name="The MGC Project Team"/>
        </authorList>
    </citation>
    <scope>NUCLEOTIDE SEQUENCE [LARGE SCALE MRNA]</scope>
    <source>
        <tissue>Lung</tissue>
    </source>
</reference>